<organism>
    <name type="scientific">Salmonella schwarzengrund (strain CVM19633)</name>
    <dbReference type="NCBI Taxonomy" id="439843"/>
    <lineage>
        <taxon>Bacteria</taxon>
        <taxon>Pseudomonadati</taxon>
        <taxon>Pseudomonadota</taxon>
        <taxon>Gammaproteobacteria</taxon>
        <taxon>Enterobacterales</taxon>
        <taxon>Enterobacteriaceae</taxon>
        <taxon>Salmonella</taxon>
    </lineage>
</organism>
<keyword id="KW-0028">Amino-acid biosynthesis</keyword>
<keyword id="KW-0057">Aromatic amino acid biosynthesis</keyword>
<keyword id="KW-0456">Lyase</keyword>
<keyword id="KW-0663">Pyridoxal phosphate</keyword>
<keyword id="KW-0822">Tryptophan biosynthesis</keyword>
<accession>B4TX38</accession>
<sequence>MTTLLNPYFGEFGGMYVPQILMPALNQLEEAFVSAQKDPEFQAQFADLLKNYAGRPTALTKCQNITAGTRTTLYLKREDLLHGGAHKTNQVLGQALLAKRMGKSEIIAETGAGQHGVASALASALLGLKCRIYMGAKDVERQSPNVFRMRLMGAEVIPVHSGSATLKDACNEALRDWSGSYETAHYMLGTAAGPHPYPTIVREFQRMIGEETKAQILDKEGRLPDAVIACVGGGSNAIGMFADFINDTSVGLIGVEPGGHGIETGEHGAPLKHGRVGIYFGMKAPMMQTADGQIEESYSISAGLDFPSVGPQHAYLNSIGRADYVSITDDEALEAFKTLCRHEGIIPALESSHALAHALKMMREQPEKEQLLVVNLSGRGDKDIFTVHDILKARGEI</sequence>
<evidence type="ECO:0000255" key="1">
    <source>
        <dbReference type="HAMAP-Rule" id="MF_00133"/>
    </source>
</evidence>
<gene>
    <name evidence="1" type="primary">trpB</name>
    <name type="ordered locus">SeSA_A1858</name>
</gene>
<dbReference type="EC" id="4.2.1.20" evidence="1"/>
<dbReference type="EMBL" id="CP001127">
    <property type="protein sequence ID" value="ACF91370.1"/>
    <property type="molecule type" value="Genomic_DNA"/>
</dbReference>
<dbReference type="RefSeq" id="WP_000209485.1">
    <property type="nucleotide sequence ID" value="NC_011094.1"/>
</dbReference>
<dbReference type="SMR" id="B4TX38"/>
<dbReference type="KEGG" id="sew:SeSA_A1858"/>
<dbReference type="HOGENOM" id="CLU_016734_3_1_6"/>
<dbReference type="UniPathway" id="UPA00035">
    <property type="reaction ID" value="UER00044"/>
</dbReference>
<dbReference type="Proteomes" id="UP000001865">
    <property type="component" value="Chromosome"/>
</dbReference>
<dbReference type="GO" id="GO:0005737">
    <property type="term" value="C:cytoplasm"/>
    <property type="evidence" value="ECO:0007669"/>
    <property type="project" value="TreeGrafter"/>
</dbReference>
<dbReference type="GO" id="GO:0004834">
    <property type="term" value="F:tryptophan synthase activity"/>
    <property type="evidence" value="ECO:0007669"/>
    <property type="project" value="UniProtKB-UniRule"/>
</dbReference>
<dbReference type="CDD" id="cd06446">
    <property type="entry name" value="Trp-synth_B"/>
    <property type="match status" value="1"/>
</dbReference>
<dbReference type="FunFam" id="3.40.50.1100:FF:000001">
    <property type="entry name" value="Tryptophan synthase beta chain"/>
    <property type="match status" value="1"/>
</dbReference>
<dbReference type="FunFam" id="3.40.50.1100:FF:000004">
    <property type="entry name" value="Tryptophan synthase beta chain"/>
    <property type="match status" value="1"/>
</dbReference>
<dbReference type="Gene3D" id="3.40.50.1100">
    <property type="match status" value="2"/>
</dbReference>
<dbReference type="HAMAP" id="MF_00133">
    <property type="entry name" value="Trp_synth_beta"/>
    <property type="match status" value="1"/>
</dbReference>
<dbReference type="InterPro" id="IPR006653">
    <property type="entry name" value="Trp_synth_b_CS"/>
</dbReference>
<dbReference type="InterPro" id="IPR006654">
    <property type="entry name" value="Trp_synth_beta"/>
</dbReference>
<dbReference type="InterPro" id="IPR023026">
    <property type="entry name" value="Trp_synth_beta/beta-like"/>
</dbReference>
<dbReference type="InterPro" id="IPR001926">
    <property type="entry name" value="TrpB-like_PALP"/>
</dbReference>
<dbReference type="InterPro" id="IPR036052">
    <property type="entry name" value="TrpB-like_PALP_sf"/>
</dbReference>
<dbReference type="NCBIfam" id="TIGR00263">
    <property type="entry name" value="trpB"/>
    <property type="match status" value="1"/>
</dbReference>
<dbReference type="PANTHER" id="PTHR48077:SF3">
    <property type="entry name" value="TRYPTOPHAN SYNTHASE"/>
    <property type="match status" value="1"/>
</dbReference>
<dbReference type="PANTHER" id="PTHR48077">
    <property type="entry name" value="TRYPTOPHAN SYNTHASE-RELATED"/>
    <property type="match status" value="1"/>
</dbReference>
<dbReference type="Pfam" id="PF00291">
    <property type="entry name" value="PALP"/>
    <property type="match status" value="1"/>
</dbReference>
<dbReference type="PIRSF" id="PIRSF001413">
    <property type="entry name" value="Trp_syn_beta"/>
    <property type="match status" value="1"/>
</dbReference>
<dbReference type="SUPFAM" id="SSF53686">
    <property type="entry name" value="Tryptophan synthase beta subunit-like PLP-dependent enzymes"/>
    <property type="match status" value="1"/>
</dbReference>
<dbReference type="PROSITE" id="PS00168">
    <property type="entry name" value="TRP_SYNTHASE_BETA"/>
    <property type="match status" value="1"/>
</dbReference>
<proteinExistence type="inferred from homology"/>
<comment type="function">
    <text evidence="1">The beta subunit is responsible for the synthesis of L-tryptophan from indole and L-serine.</text>
</comment>
<comment type="catalytic activity">
    <reaction evidence="1">
        <text>(1S,2R)-1-C-(indol-3-yl)glycerol 3-phosphate + L-serine = D-glyceraldehyde 3-phosphate + L-tryptophan + H2O</text>
        <dbReference type="Rhea" id="RHEA:10532"/>
        <dbReference type="ChEBI" id="CHEBI:15377"/>
        <dbReference type="ChEBI" id="CHEBI:33384"/>
        <dbReference type="ChEBI" id="CHEBI:57912"/>
        <dbReference type="ChEBI" id="CHEBI:58866"/>
        <dbReference type="ChEBI" id="CHEBI:59776"/>
        <dbReference type="EC" id="4.2.1.20"/>
    </reaction>
</comment>
<comment type="cofactor">
    <cofactor evidence="1">
        <name>pyridoxal 5'-phosphate</name>
        <dbReference type="ChEBI" id="CHEBI:597326"/>
    </cofactor>
</comment>
<comment type="pathway">
    <text evidence="1">Amino-acid biosynthesis; L-tryptophan biosynthesis; L-tryptophan from chorismate: step 5/5.</text>
</comment>
<comment type="subunit">
    <text evidence="1">Tetramer of two alpha and two beta chains.</text>
</comment>
<comment type="similarity">
    <text evidence="1">Belongs to the TrpB family.</text>
</comment>
<name>TRPB_SALSV</name>
<reference key="1">
    <citation type="journal article" date="2011" name="J. Bacteriol.">
        <title>Comparative genomics of 28 Salmonella enterica isolates: evidence for CRISPR-mediated adaptive sublineage evolution.</title>
        <authorList>
            <person name="Fricke W.F."/>
            <person name="Mammel M.K."/>
            <person name="McDermott P.F."/>
            <person name="Tartera C."/>
            <person name="White D.G."/>
            <person name="Leclerc J.E."/>
            <person name="Ravel J."/>
            <person name="Cebula T.A."/>
        </authorList>
    </citation>
    <scope>NUCLEOTIDE SEQUENCE [LARGE SCALE GENOMIC DNA]</scope>
    <source>
        <strain>CVM19633</strain>
    </source>
</reference>
<feature type="chain" id="PRO_1000095822" description="Tryptophan synthase beta chain">
    <location>
        <begin position="1"/>
        <end position="397"/>
    </location>
</feature>
<feature type="modified residue" description="N6-(pyridoxal phosphate)lysine" evidence="1">
    <location>
        <position position="87"/>
    </location>
</feature>
<protein>
    <recommendedName>
        <fullName evidence="1">Tryptophan synthase beta chain</fullName>
        <ecNumber evidence="1">4.2.1.20</ecNumber>
    </recommendedName>
</protein>